<proteinExistence type="evidence at protein level"/>
<name>UCP3_MOUSE</name>
<accession>P56501</accession>
<accession>O88293</accession>
<evidence type="ECO:0000250" key="1"/>
<evidence type="ECO:0000255" key="2"/>
<evidence type="ECO:0000269" key="3">
    <source>
    </source>
</evidence>
<evidence type="ECO:0000269" key="4">
    <source>
    </source>
</evidence>
<evidence type="ECO:0000269" key="5">
    <source>
    </source>
</evidence>
<evidence type="ECO:0000269" key="6">
    <source>
    </source>
</evidence>
<evidence type="ECO:0000269" key="7">
    <source>
    </source>
</evidence>
<evidence type="ECO:0000269" key="8">
    <source>
    </source>
</evidence>
<evidence type="ECO:0000303" key="9">
    <source>
    </source>
</evidence>
<evidence type="ECO:0000305" key="10"/>
<evidence type="ECO:0000312" key="11">
    <source>
        <dbReference type="MGI" id="MGI:1099787"/>
    </source>
</evidence>
<organism>
    <name type="scientific">Mus musculus</name>
    <name type="common">Mouse</name>
    <dbReference type="NCBI Taxonomy" id="10090"/>
    <lineage>
        <taxon>Eukaryota</taxon>
        <taxon>Metazoa</taxon>
        <taxon>Chordata</taxon>
        <taxon>Craniata</taxon>
        <taxon>Vertebrata</taxon>
        <taxon>Euteleostomi</taxon>
        <taxon>Mammalia</taxon>
        <taxon>Eutheria</taxon>
        <taxon>Euarchontoglires</taxon>
        <taxon>Glires</taxon>
        <taxon>Rodentia</taxon>
        <taxon>Myomorpha</taxon>
        <taxon>Muroidea</taxon>
        <taxon>Muridae</taxon>
        <taxon>Murinae</taxon>
        <taxon>Mus</taxon>
        <taxon>Mus</taxon>
    </lineage>
</organism>
<sequence>MVGLQPSEVPPTTVVKFLGAGTAACFADLLTFPLDTAKVRLQIQGENPGAQSVQYRGVLGTILTMVRTEGPRSPYSGLVAGLHRQMSFASIRIGLYDSVKQFYTPKGADHSSVAIRILAGCTTGAMAVTCAQPTDVVKVRFQAMIRLGTGGERKYRGTMDAYRTIAREEGVRGLWKGTWPNITRNAIVNCAEMVTYDIIKEKLLESHLFTDNFPCHFVSAFGAGFCATVVASPVDVVKTRYMNAPLGRYRSPLHCMLKMVAQEGPTAFYKGFVPSFLRLGAWNVMMFVTYEQLKRALMKVQVLRESPF</sequence>
<dbReference type="EMBL" id="AF032902">
    <property type="protein sequence ID" value="AAB87084.1"/>
    <property type="molecule type" value="mRNA"/>
</dbReference>
<dbReference type="EMBL" id="AB010742">
    <property type="protein sequence ID" value="BAA25697.1"/>
    <property type="molecule type" value="mRNA"/>
</dbReference>
<dbReference type="EMBL" id="AF030164">
    <property type="protein sequence ID" value="AAD01892.1"/>
    <property type="molecule type" value="mRNA"/>
</dbReference>
<dbReference type="EMBL" id="AB008216">
    <property type="protein sequence ID" value="BAA33502.1"/>
    <property type="molecule type" value="mRNA"/>
</dbReference>
<dbReference type="EMBL" id="AF053352">
    <property type="protein sequence ID" value="AAC28328.1"/>
    <property type="molecule type" value="mRNA"/>
</dbReference>
<dbReference type="EMBL" id="AB013132">
    <property type="protein sequence ID" value="BAA31989.1"/>
    <property type="molecule type" value="mRNA"/>
</dbReference>
<dbReference type="EMBL" id="AF019883">
    <property type="protein sequence ID" value="AAB71543.1"/>
    <property type="molecule type" value="mRNA"/>
</dbReference>
<dbReference type="CCDS" id="CCDS21497.1"/>
<dbReference type="RefSeq" id="NP_033490.1">
    <property type="nucleotide sequence ID" value="NM_009464.3"/>
</dbReference>
<dbReference type="SMR" id="P56501"/>
<dbReference type="CORUM" id="P56501"/>
<dbReference type="FunCoup" id="P56501">
    <property type="interactions" value="376"/>
</dbReference>
<dbReference type="STRING" id="10090.ENSMUSP00000032958"/>
<dbReference type="iPTMnet" id="P56501"/>
<dbReference type="PhosphoSitePlus" id="P56501"/>
<dbReference type="PaxDb" id="10090-ENSMUSP00000032958"/>
<dbReference type="ProteomicsDB" id="298428"/>
<dbReference type="Antibodypedia" id="4388">
    <property type="antibodies" value="283 antibodies from 34 providers"/>
</dbReference>
<dbReference type="DNASU" id="22229"/>
<dbReference type="Ensembl" id="ENSMUST00000032958.14">
    <property type="protein sequence ID" value="ENSMUSP00000032958.8"/>
    <property type="gene ID" value="ENSMUSG00000032942.15"/>
</dbReference>
<dbReference type="Ensembl" id="ENSMUST00000107059.2">
    <property type="protein sequence ID" value="ENSMUSP00000102674.2"/>
    <property type="gene ID" value="ENSMUSG00000032942.15"/>
</dbReference>
<dbReference type="GeneID" id="22229"/>
<dbReference type="KEGG" id="mmu:22229"/>
<dbReference type="UCSC" id="uc009ina.1">
    <property type="organism name" value="mouse"/>
</dbReference>
<dbReference type="AGR" id="MGI:1099787"/>
<dbReference type="CTD" id="7352"/>
<dbReference type="MGI" id="MGI:1099787">
    <property type="gene designation" value="Ucp3"/>
</dbReference>
<dbReference type="VEuPathDB" id="HostDB:ENSMUSG00000032942"/>
<dbReference type="eggNOG" id="KOG0753">
    <property type="taxonomic scope" value="Eukaryota"/>
</dbReference>
<dbReference type="GeneTree" id="ENSGT00940000161030"/>
<dbReference type="HOGENOM" id="CLU_015166_14_2_1"/>
<dbReference type="InParanoid" id="P56501"/>
<dbReference type="OMA" id="TRIMSAH"/>
<dbReference type="OrthoDB" id="448427at2759"/>
<dbReference type="PhylomeDB" id="P56501"/>
<dbReference type="TreeFam" id="TF323211"/>
<dbReference type="Reactome" id="R-MMU-167826">
    <property type="pathway name" value="The fatty acid cycling model"/>
</dbReference>
<dbReference type="BioGRID-ORCS" id="22229">
    <property type="hits" value="5 hits in 78 CRISPR screens"/>
</dbReference>
<dbReference type="ChiTaRS" id="Ucp3">
    <property type="organism name" value="mouse"/>
</dbReference>
<dbReference type="PRO" id="PR:P56501"/>
<dbReference type="Proteomes" id="UP000000589">
    <property type="component" value="Chromosome 7"/>
</dbReference>
<dbReference type="RNAct" id="P56501">
    <property type="molecule type" value="protein"/>
</dbReference>
<dbReference type="Bgee" id="ENSMUSG00000032942">
    <property type="expression patterns" value="Expressed in hindlimb stylopod muscle and 93 other cell types or tissues"/>
</dbReference>
<dbReference type="ExpressionAtlas" id="P56501">
    <property type="expression patterns" value="baseline and differential"/>
</dbReference>
<dbReference type="GO" id="GO:0005743">
    <property type="term" value="C:mitochondrial inner membrane"/>
    <property type="evidence" value="ECO:0000314"/>
    <property type="project" value="UniProtKB"/>
</dbReference>
<dbReference type="GO" id="GO:0005739">
    <property type="term" value="C:mitochondrion"/>
    <property type="evidence" value="ECO:0000315"/>
    <property type="project" value="MGI"/>
</dbReference>
<dbReference type="GO" id="GO:0017077">
    <property type="term" value="F:oxidative phosphorylation uncoupler activity"/>
    <property type="evidence" value="ECO:0000315"/>
    <property type="project" value="MGI"/>
</dbReference>
<dbReference type="GO" id="GO:0015078">
    <property type="term" value="F:proton transmembrane transporter activity"/>
    <property type="evidence" value="ECO:0000314"/>
    <property type="project" value="UniProtKB"/>
</dbReference>
<dbReference type="GO" id="GO:0032870">
    <property type="term" value="P:cellular response to hormone stimulus"/>
    <property type="evidence" value="ECO:0007669"/>
    <property type="project" value="Ensembl"/>
</dbReference>
<dbReference type="GO" id="GO:0006631">
    <property type="term" value="P:fatty acid metabolic process"/>
    <property type="evidence" value="ECO:0000315"/>
    <property type="project" value="MGI"/>
</dbReference>
<dbReference type="GO" id="GO:1901373">
    <property type="term" value="P:lipid hydroperoxide transport"/>
    <property type="evidence" value="ECO:0000315"/>
    <property type="project" value="UniProtKB"/>
</dbReference>
<dbReference type="GO" id="GO:1902600">
    <property type="term" value="P:proton transmembrane transport"/>
    <property type="evidence" value="ECO:0000314"/>
    <property type="project" value="UniProtKB"/>
</dbReference>
<dbReference type="GO" id="GO:0014823">
    <property type="term" value="P:response to activity"/>
    <property type="evidence" value="ECO:0007669"/>
    <property type="project" value="Ensembl"/>
</dbReference>
<dbReference type="GO" id="GO:1901557">
    <property type="term" value="P:response to fenofibrate"/>
    <property type="evidence" value="ECO:0007669"/>
    <property type="project" value="Ensembl"/>
</dbReference>
<dbReference type="GO" id="GO:0051384">
    <property type="term" value="P:response to glucocorticoid"/>
    <property type="evidence" value="ECO:0007669"/>
    <property type="project" value="Ensembl"/>
</dbReference>
<dbReference type="GO" id="GO:0001666">
    <property type="term" value="P:response to hypoxia"/>
    <property type="evidence" value="ECO:0007669"/>
    <property type="project" value="Ensembl"/>
</dbReference>
<dbReference type="GO" id="GO:0032868">
    <property type="term" value="P:response to insulin"/>
    <property type="evidence" value="ECO:0007669"/>
    <property type="project" value="Ensembl"/>
</dbReference>
<dbReference type="GO" id="GO:0007584">
    <property type="term" value="P:response to nutrient"/>
    <property type="evidence" value="ECO:0007669"/>
    <property type="project" value="Ensembl"/>
</dbReference>
<dbReference type="GO" id="GO:0000303">
    <property type="term" value="P:response to superoxide"/>
    <property type="evidence" value="ECO:0000315"/>
    <property type="project" value="MGI"/>
</dbReference>
<dbReference type="FunFam" id="1.50.40.10:FF:000008">
    <property type="entry name" value="Mitochondrial uncoupling protein 2"/>
    <property type="match status" value="1"/>
</dbReference>
<dbReference type="Gene3D" id="1.50.40.10">
    <property type="entry name" value="Mitochondrial carrier domain"/>
    <property type="match status" value="1"/>
</dbReference>
<dbReference type="InterPro" id="IPR002067">
    <property type="entry name" value="Mit_carrier"/>
</dbReference>
<dbReference type="InterPro" id="IPR050391">
    <property type="entry name" value="Mito_Metabolite_Transporter"/>
</dbReference>
<dbReference type="InterPro" id="IPR018108">
    <property type="entry name" value="Mitochondrial_sb/sol_carrier"/>
</dbReference>
<dbReference type="InterPro" id="IPR023395">
    <property type="entry name" value="Mt_carrier_dom_sf"/>
</dbReference>
<dbReference type="PANTHER" id="PTHR45618">
    <property type="entry name" value="MITOCHONDRIAL DICARBOXYLATE CARRIER-RELATED"/>
    <property type="match status" value="1"/>
</dbReference>
<dbReference type="Pfam" id="PF00153">
    <property type="entry name" value="Mito_carr"/>
    <property type="match status" value="3"/>
</dbReference>
<dbReference type="PRINTS" id="PR00784">
    <property type="entry name" value="MTUNCOUPLING"/>
</dbReference>
<dbReference type="SUPFAM" id="SSF103506">
    <property type="entry name" value="Mitochondrial carrier"/>
    <property type="match status" value="1"/>
</dbReference>
<dbReference type="PROSITE" id="PS50920">
    <property type="entry name" value="SOLCAR"/>
    <property type="match status" value="3"/>
</dbReference>
<gene>
    <name evidence="11" type="primary">Ucp3</name>
    <name type="synonym">Slc25a9</name>
</gene>
<keyword id="KW-0472">Membrane</keyword>
<keyword id="KW-0496">Mitochondrion</keyword>
<keyword id="KW-0999">Mitochondrion inner membrane</keyword>
<keyword id="KW-1185">Reference proteome</keyword>
<keyword id="KW-0677">Repeat</keyword>
<keyword id="KW-0812">Transmembrane</keyword>
<keyword id="KW-1133">Transmembrane helix</keyword>
<keyword id="KW-0813">Transport</keyword>
<reference key="1">
    <citation type="submission" date="1997-11" db="EMBL/GenBank/DDBJ databases">
        <authorList>
            <person name="Sanchis D."/>
            <person name="Fleury C."/>
            <person name="Bouillaud F."/>
            <person name="Ricquier D."/>
        </authorList>
    </citation>
    <scope>NUCLEOTIDE SEQUENCE [MRNA]</scope>
    <source>
        <strain>BALB/cJ</strain>
    </source>
</reference>
<reference key="2">
    <citation type="journal article" date="1998" name="Gene">
        <title>Cloning of mouse uncoupling protein 3 cDNA and 5'-flanking region, and its genetic map.</title>
        <authorList>
            <person name="Yoshitomi H."/>
            <person name="Yamazaki K."/>
            <person name="Tanaka I."/>
        </authorList>
    </citation>
    <scope>NUCLEOTIDE SEQUENCE [MRNA]</scope>
    <source>
        <strain>Swiss Webster</strain>
        <tissue>Embryo</tissue>
    </source>
</reference>
<reference key="3">
    <citation type="submission" date="1997-10" db="EMBL/GenBank/DDBJ databases">
        <authorList>
            <person name="Grujic D."/>
            <person name="Zhan C.-Y."/>
            <person name="Sleiker L.J."/>
            <person name="Lowell B.B."/>
        </authorList>
    </citation>
    <scope>NUCLEOTIDE SEQUENCE [MRNA]</scope>
    <source>
        <strain>BALB/cJ</strain>
        <tissue>Skeletal muscle</tissue>
    </source>
</reference>
<reference key="4">
    <citation type="submission" date="1997-10" db="EMBL/GenBank/DDBJ databases">
        <title>Cloning of mouse UCP3 cDNA.</title>
        <authorList>
            <person name="Son C."/>
            <person name="Hosoda K."/>
            <person name="Matsuda J."/>
            <person name="Nakao K."/>
        </authorList>
    </citation>
    <scope>NUCLEOTIDE SEQUENCE [MRNA]</scope>
    <source>
        <strain>C57BL/6J</strain>
        <tissue>Skeletal muscle</tissue>
    </source>
</reference>
<reference key="5">
    <citation type="journal article" date="1999" name="Biochem. Biophys. Res. Commun.">
        <title>Genomic organization and regulation by dietary fat of the uncoupling protein 3 and 2 genes.</title>
        <authorList>
            <person name="Gong D.W."/>
            <person name="He Y."/>
            <person name="Reitman M.L."/>
        </authorList>
    </citation>
    <scope>NUCLEOTIDE SEQUENCE [MRNA]</scope>
</reference>
<reference key="6">
    <citation type="journal article" date="1998" name="Biochem. Biophys. Res. Commun.">
        <title>Transcriptional regulation of muscle-specific genes during myoblast differentiation.</title>
        <authorList>
            <person name="Shimokawa T."/>
            <person name="Kato M."/>
            <person name="Ezaki O."/>
            <person name="Hashimoto S."/>
        </authorList>
    </citation>
    <scope>NUCLEOTIDE SEQUENCE [MRNA] OF 84-180</scope>
    <source>
        <strain>C57BL/6J</strain>
        <tissue>Skeletal muscle</tissue>
    </source>
</reference>
<reference key="7">
    <citation type="submission" date="1997-10" db="EMBL/GenBank/DDBJ databases">
        <authorList>
            <person name="Yan X."/>
            <person name="Ramsay T.G."/>
        </authorList>
    </citation>
    <scope>NUCLEOTIDE SEQUENCE [MRNA] OF 162-252</scope>
</reference>
<reference key="8">
    <citation type="journal article" date="2000" name="J. Biol. Chem.">
        <title>Lack of obesity and normal response to fasting and thyroid hormone in mice lacking uncoupling protein-3.</title>
        <authorList>
            <person name="Gong D.W."/>
            <person name="Monemdjou S."/>
            <person name="Gavrilova O."/>
            <person name="Leon L.R."/>
            <person name="Marcus-Samuels B."/>
            <person name="Chou C.J."/>
            <person name="Everett C."/>
            <person name="Kozak L.P."/>
            <person name="Li C."/>
            <person name="Deng C."/>
            <person name="Harper M.E."/>
            <person name="Reitman M.L."/>
        </authorList>
    </citation>
    <scope>FUNCTION</scope>
    <scope>DISRUPTION PHENOTYPE</scope>
</reference>
<reference key="9">
    <citation type="journal article" date="2000" name="J. Biol. Chem.">
        <title>Energy metabolism in uncoupling protein 3 gene knockout mice.</title>
        <authorList>
            <person name="Vidal-Puig A.J."/>
            <person name="Grujic D."/>
            <person name="Zhang C.Y."/>
            <person name="Hagen T."/>
            <person name="Boss O."/>
            <person name="Ido Y."/>
            <person name="Szczepanik A."/>
            <person name="Wade J."/>
            <person name="Mootha V."/>
            <person name="Cortright R."/>
            <person name="Muoio D.M."/>
            <person name="Lowell B.B."/>
        </authorList>
    </citation>
    <scope>FUNCTION</scope>
    <scope>DISRUPTION PHENOTYPE</scope>
</reference>
<reference key="10">
    <citation type="journal article" date="2002" name="J. Biol. Chem.">
        <title>The basal proton conductance of skeletal muscle mitochondria from transgenic mice overexpressing or lacking uncoupling protein-3.</title>
        <authorList>
            <person name="Cadenas S."/>
            <person name="Echtay K.S."/>
            <person name="Harper J.A."/>
            <person name="Jekabsons M.B."/>
            <person name="Buckingham J.A."/>
            <person name="Grau E."/>
            <person name="Abuin A."/>
            <person name="Chapman H."/>
            <person name="Clapham J.C."/>
            <person name="Brand M.D."/>
        </authorList>
    </citation>
    <scope>FUNCTION</scope>
</reference>
<reference key="11">
    <citation type="journal article" date="2010" name="Cell">
        <title>A tissue-specific atlas of mouse protein phosphorylation and expression.</title>
        <authorList>
            <person name="Huttlin E.L."/>
            <person name="Jedrychowski M.P."/>
            <person name="Elias J.E."/>
            <person name="Goswami T."/>
            <person name="Rad R."/>
            <person name="Beausoleil S.A."/>
            <person name="Villen J."/>
            <person name="Haas W."/>
            <person name="Sowa M.E."/>
            <person name="Gygi S.P."/>
        </authorList>
    </citation>
    <scope>IDENTIFICATION BY MASS SPECTROMETRY [LARGE SCALE ANALYSIS]</scope>
    <source>
        <tissue>Brown adipose tissue</tissue>
        <tissue>Heart</tissue>
    </source>
</reference>
<reference key="12">
    <citation type="journal article" date="2010" name="J. Biol. Chem.">
        <title>UCP3 translocates lipid hydroperoxide and mediates lipid hydroperoxide-dependent mitochondrial uncoupling.</title>
        <authorList>
            <person name="Lombardi A."/>
            <person name="Busiello R.A."/>
            <person name="Napolitano L."/>
            <person name="Cioffi F."/>
            <person name="Moreno M."/>
            <person name="de Lange P."/>
            <person name="Silvestri E."/>
            <person name="Lanni A."/>
            <person name="Goglia F."/>
        </authorList>
    </citation>
    <scope>FUNCTION</scope>
</reference>
<reference key="13">
    <citation type="journal article" date="2016" name="Biochem. Biophys. Res. Commun.">
        <title>UCP3 is associated with Hax-1 in mitochondria in the presence of calcium ion.</title>
        <authorList>
            <person name="Hirasaka K."/>
            <person name="Mills E.M."/>
            <person name="Haruna M."/>
            <person name="Bando A."/>
            <person name="Ikeda C."/>
            <person name="Abe T."/>
            <person name="Kohno S."/>
            <person name="Nowinski S.M."/>
            <person name="Lago C.U."/>
            <person name="Akagi K."/>
            <person name="Tochio H."/>
            <person name="Ohno A."/>
            <person name="Teshima-Kondo S."/>
            <person name="Okumura Y."/>
            <person name="Nikawa T."/>
        </authorList>
    </citation>
    <scope>INTERACTION WITH HAX1</scope>
    <scope>SUBCELLULAR LOCATION</scope>
    <scope>TOPOLOGY</scope>
</reference>
<reference key="14">
    <citation type="journal article" date="2018" name="Biochim. Biophys. Acta">
        <title>Inhibition of mitochondrial UCP1 and UCP3 by purine nucleotides and phosphate.</title>
        <authorList>
            <person name="Macher G."/>
            <person name="Koehler M."/>
            <person name="Rupprecht A."/>
            <person name="Kreiter J."/>
            <person name="Hinterdorfer P."/>
            <person name="Pohl E.E."/>
        </authorList>
    </citation>
    <scope>FUNCTION</scope>
    <scope>ACTIVITY REGULATION</scope>
    <scope>MUTAGENESIS OF ARG-84; ARG-184 AND ARG-278</scope>
</reference>
<feature type="chain" id="PRO_0000090673" description="Putative mitochondrial transporter UCP3">
    <location>
        <begin position="1"/>
        <end position="308"/>
    </location>
</feature>
<feature type="topological domain" description="Mitochondrial intermembrane" evidence="7">
    <location>
        <begin position="1"/>
        <end position="10"/>
    </location>
</feature>
<feature type="transmembrane region" description="Helical; Name=1" evidence="2">
    <location>
        <begin position="11"/>
        <end position="32"/>
    </location>
</feature>
<feature type="topological domain" description="Mitochondrial matrix" evidence="7">
    <location>
        <begin position="33"/>
        <end position="73"/>
    </location>
</feature>
<feature type="transmembrane region" description="Helical; Name=2" evidence="2">
    <location>
        <begin position="74"/>
        <end position="96"/>
    </location>
</feature>
<feature type="topological domain" description="Mitochondrial intermembrane" evidence="7">
    <location>
        <begin position="97"/>
        <end position="116"/>
    </location>
</feature>
<feature type="transmembrane region" description="Helical; Name=3" evidence="2">
    <location>
        <begin position="117"/>
        <end position="133"/>
    </location>
</feature>
<feature type="topological domain" description="Mitochondrial matrix" evidence="7">
    <location>
        <begin position="134"/>
        <end position="179"/>
    </location>
</feature>
<feature type="transmembrane region" description="Helical; Name=4" evidence="2">
    <location>
        <begin position="180"/>
        <end position="196"/>
    </location>
</feature>
<feature type="topological domain" description="Mitochondrial intermembrane" evidence="7">
    <location>
        <begin position="197"/>
        <end position="213"/>
    </location>
</feature>
<feature type="transmembrane region" description="Helical; Name=5" evidence="2">
    <location>
        <begin position="214"/>
        <end position="233"/>
    </location>
</feature>
<feature type="topological domain" description="Mitochondrial matrix" evidence="7">
    <location>
        <begin position="234"/>
        <end position="267"/>
    </location>
</feature>
<feature type="transmembrane region" description="Helical; Name=6" evidence="2">
    <location>
        <begin position="268"/>
        <end position="290"/>
    </location>
</feature>
<feature type="topological domain" description="Mitochondrial intermembrane" evidence="7">
    <location>
        <begin position="291"/>
        <end position="308"/>
    </location>
</feature>
<feature type="repeat" description="Solcar 1">
    <location>
        <begin position="11"/>
        <end position="102"/>
    </location>
</feature>
<feature type="repeat" description="Solcar 2">
    <location>
        <begin position="111"/>
        <end position="202"/>
    </location>
</feature>
<feature type="repeat" description="Solcar 3">
    <location>
        <begin position="211"/>
        <end position="296"/>
    </location>
</feature>
<feature type="region of interest" description="Purine nucleotide binding" evidence="1">
    <location>
        <begin position="275"/>
        <end position="297"/>
    </location>
</feature>
<feature type="mutagenesis site" description="Changed proton transmembrane transport. Decreased inhibition by ATP and ADP. No effect on AMP-mediated inhibition." evidence="8">
    <original>R</original>
    <variation>Q</variation>
    <location>
        <position position="84"/>
    </location>
</feature>
<feature type="mutagenesis site" description="Changed proton transmembrane transport. Loss of inhibition by the purine nucleotides ATP, ADP and AMP." evidence="8">
    <original>R</original>
    <variation>T</variation>
    <location>
        <position position="184"/>
    </location>
</feature>
<feature type="mutagenesis site" description="No effect on proton transmembrane transport. No effect on inhibition by ATP, ADP and AMP." evidence="8">
    <original>R</original>
    <variation>L</variation>
    <location>
        <position position="278"/>
    </location>
</feature>
<feature type="sequence conflict" description="In Ref. 6; BAA31989." evidence="10" ref="6">
    <original>W</original>
    <variation>L</variation>
    <location>
        <position position="179"/>
    </location>
</feature>
<protein>
    <recommendedName>
        <fullName evidence="10">Putative mitochondrial transporter UCP3</fullName>
    </recommendedName>
    <alternativeName>
        <fullName>Solute carrier family 25 member 9</fullName>
    </alternativeName>
    <alternativeName>
        <fullName evidence="9">Uncoupling protein 3</fullName>
        <shortName>UCP 3</shortName>
    </alternativeName>
</protein>
<comment type="function">
    <text evidence="3 4 5 6 8">Putative transmembrane transporter that plays a role in mitochondrial metabolism via an as yet unclear mechanism (PubMed:10748195, PubMed:10748196). Originally, this mitochondrial protein was thought to act as a proton transmembrane transporter from the mitochondrial intermembrane space into the matrix, causing proton leaks through the inner mitochondrial membrane, thereby uncoupling mitochondrial membrane potential generation from ATP synthesis (PubMed:29212043). However, this function is controversial and uncoupling may not be the function, or at least not the main function, but rather a consequence of more conventional metabolite transporter activity (PubMed:11707458, PubMed:20363757).</text>
</comment>
<comment type="activity regulation">
    <text evidence="8">Inhibited by purine nucleotides and inorganic phosphate (in vitro).</text>
</comment>
<comment type="subunit">
    <text evidence="7">Interacts with HAX1; the interaction is direct and calcium-dependent.</text>
</comment>
<comment type="subcellular location">
    <subcellularLocation>
        <location evidence="7">Mitochondrion inner membrane</location>
        <topology evidence="2">Multi-pass membrane protein</topology>
    </subcellularLocation>
</comment>
<comment type="disruption phenotype">
    <text evidence="3 4">Homozygous knockout mice lacking Ucp3 show no overt phenotype being born at the expected frequency, with no observed signs of abnormality, illness, or increased mortality at up to one year of age. They are not obese and have reduced free fatty acids and glucose serum levels. They show a normal circadian rhythm in body temperature and motor activity and have normal body temperature responses to fasting, stress, thyroid hormone, and cold exposure. The baseline metabolic rate and respiratory exchange ratio are the same in knockout and control mice. However, there is decreased proton leak in the mitochondria over the complete range of metabolic rates studied (PubMed:10748195, PubMed:10748196). Mitochondria are more coupled and the production of reactive oxygen species is increased. No effect on exercise tolerance and fatty acid oxidation is observed (PubMed:10748196).</text>
</comment>
<comment type="similarity">
    <text evidence="10">Belongs to the mitochondrial carrier (TC 2.A.29) family.</text>
</comment>